<feature type="chain" id="PRO_1000100125" description="Shikimate dehydrogenase (NADP(+))">
    <location>
        <begin position="1"/>
        <end position="276"/>
    </location>
</feature>
<feature type="active site" description="Proton acceptor" evidence="1">
    <location>
        <position position="66"/>
    </location>
</feature>
<feature type="binding site" evidence="1">
    <location>
        <begin position="15"/>
        <end position="17"/>
    </location>
    <ligand>
        <name>shikimate</name>
        <dbReference type="ChEBI" id="CHEBI:36208"/>
    </ligand>
</feature>
<feature type="binding site" evidence="1">
    <location>
        <position position="62"/>
    </location>
    <ligand>
        <name>shikimate</name>
        <dbReference type="ChEBI" id="CHEBI:36208"/>
    </ligand>
</feature>
<feature type="binding site" evidence="1">
    <location>
        <position position="78"/>
    </location>
    <ligand>
        <name>NADP(+)</name>
        <dbReference type="ChEBI" id="CHEBI:58349"/>
    </ligand>
</feature>
<feature type="binding site" evidence="1">
    <location>
        <position position="87"/>
    </location>
    <ligand>
        <name>shikimate</name>
        <dbReference type="ChEBI" id="CHEBI:36208"/>
    </ligand>
</feature>
<feature type="binding site" evidence="1">
    <location>
        <position position="103"/>
    </location>
    <ligand>
        <name>shikimate</name>
        <dbReference type="ChEBI" id="CHEBI:36208"/>
    </ligand>
</feature>
<feature type="binding site" evidence="1">
    <location>
        <begin position="128"/>
        <end position="132"/>
    </location>
    <ligand>
        <name>NADP(+)</name>
        <dbReference type="ChEBI" id="CHEBI:58349"/>
    </ligand>
</feature>
<feature type="binding site" evidence="1">
    <location>
        <position position="217"/>
    </location>
    <ligand>
        <name>NADP(+)</name>
        <dbReference type="ChEBI" id="CHEBI:58349"/>
    </ligand>
</feature>
<feature type="binding site" evidence="1">
    <location>
        <position position="219"/>
    </location>
    <ligand>
        <name>shikimate</name>
        <dbReference type="ChEBI" id="CHEBI:36208"/>
    </ligand>
</feature>
<feature type="binding site" evidence="1">
    <location>
        <position position="240"/>
    </location>
    <ligand>
        <name>NADP(+)</name>
        <dbReference type="ChEBI" id="CHEBI:58349"/>
    </ligand>
</feature>
<organism>
    <name type="scientific">Lysinibacillus sphaericus (strain C3-41)</name>
    <dbReference type="NCBI Taxonomy" id="444177"/>
    <lineage>
        <taxon>Bacteria</taxon>
        <taxon>Bacillati</taxon>
        <taxon>Bacillota</taxon>
        <taxon>Bacilli</taxon>
        <taxon>Bacillales</taxon>
        <taxon>Bacillaceae</taxon>
        <taxon>Lysinibacillus</taxon>
    </lineage>
</organism>
<protein>
    <recommendedName>
        <fullName evidence="1">Shikimate dehydrogenase (NADP(+))</fullName>
        <shortName evidence="1">SDH</shortName>
        <ecNumber evidence="1">1.1.1.25</ecNumber>
    </recommendedName>
</protein>
<comment type="function">
    <text evidence="1">Involved in the biosynthesis of the chorismate, which leads to the biosynthesis of aromatic amino acids. Catalyzes the reversible NADPH linked reduction of 3-dehydroshikimate (DHSA) to yield shikimate (SA).</text>
</comment>
<comment type="catalytic activity">
    <reaction evidence="1">
        <text>shikimate + NADP(+) = 3-dehydroshikimate + NADPH + H(+)</text>
        <dbReference type="Rhea" id="RHEA:17737"/>
        <dbReference type="ChEBI" id="CHEBI:15378"/>
        <dbReference type="ChEBI" id="CHEBI:16630"/>
        <dbReference type="ChEBI" id="CHEBI:36208"/>
        <dbReference type="ChEBI" id="CHEBI:57783"/>
        <dbReference type="ChEBI" id="CHEBI:58349"/>
        <dbReference type="EC" id="1.1.1.25"/>
    </reaction>
</comment>
<comment type="pathway">
    <text evidence="1">Metabolic intermediate biosynthesis; chorismate biosynthesis; chorismate from D-erythrose 4-phosphate and phosphoenolpyruvate: step 4/7.</text>
</comment>
<comment type="subunit">
    <text evidence="1">Homodimer.</text>
</comment>
<comment type="similarity">
    <text evidence="1">Belongs to the shikimate dehydrogenase family.</text>
</comment>
<proteinExistence type="inferred from homology"/>
<accession>B1HUI4</accession>
<dbReference type="EC" id="1.1.1.25" evidence="1"/>
<dbReference type="EMBL" id="CP000817">
    <property type="protein sequence ID" value="ACA41329.1"/>
    <property type="molecule type" value="Genomic_DNA"/>
</dbReference>
<dbReference type="RefSeq" id="WP_012295376.1">
    <property type="nucleotide sequence ID" value="NC_010382.1"/>
</dbReference>
<dbReference type="SMR" id="B1HUI4"/>
<dbReference type="EnsemblBacteria" id="ACA41329">
    <property type="protein sequence ID" value="ACA41329"/>
    <property type="gene ID" value="Bsph_3851"/>
</dbReference>
<dbReference type="KEGG" id="lsp:Bsph_3851"/>
<dbReference type="HOGENOM" id="CLU_044063_4_1_9"/>
<dbReference type="UniPathway" id="UPA00053">
    <property type="reaction ID" value="UER00087"/>
</dbReference>
<dbReference type="Proteomes" id="UP000002164">
    <property type="component" value="Chromosome"/>
</dbReference>
<dbReference type="GO" id="GO:0005829">
    <property type="term" value="C:cytosol"/>
    <property type="evidence" value="ECO:0007669"/>
    <property type="project" value="TreeGrafter"/>
</dbReference>
<dbReference type="GO" id="GO:0050661">
    <property type="term" value="F:NADP binding"/>
    <property type="evidence" value="ECO:0007669"/>
    <property type="project" value="InterPro"/>
</dbReference>
<dbReference type="GO" id="GO:0004764">
    <property type="term" value="F:shikimate 3-dehydrogenase (NADP+) activity"/>
    <property type="evidence" value="ECO:0007669"/>
    <property type="project" value="UniProtKB-UniRule"/>
</dbReference>
<dbReference type="GO" id="GO:0008652">
    <property type="term" value="P:amino acid biosynthetic process"/>
    <property type="evidence" value="ECO:0007669"/>
    <property type="project" value="UniProtKB-KW"/>
</dbReference>
<dbReference type="GO" id="GO:0009073">
    <property type="term" value="P:aromatic amino acid family biosynthetic process"/>
    <property type="evidence" value="ECO:0007669"/>
    <property type="project" value="UniProtKB-KW"/>
</dbReference>
<dbReference type="GO" id="GO:0009423">
    <property type="term" value="P:chorismate biosynthetic process"/>
    <property type="evidence" value="ECO:0007669"/>
    <property type="project" value="UniProtKB-UniRule"/>
</dbReference>
<dbReference type="GO" id="GO:0019632">
    <property type="term" value="P:shikimate metabolic process"/>
    <property type="evidence" value="ECO:0007669"/>
    <property type="project" value="InterPro"/>
</dbReference>
<dbReference type="CDD" id="cd01065">
    <property type="entry name" value="NAD_bind_Shikimate_DH"/>
    <property type="match status" value="1"/>
</dbReference>
<dbReference type="Gene3D" id="3.40.50.10860">
    <property type="entry name" value="Leucine Dehydrogenase, chain A, domain 1"/>
    <property type="match status" value="1"/>
</dbReference>
<dbReference type="Gene3D" id="3.40.50.720">
    <property type="entry name" value="NAD(P)-binding Rossmann-like Domain"/>
    <property type="match status" value="1"/>
</dbReference>
<dbReference type="HAMAP" id="MF_00222">
    <property type="entry name" value="Shikimate_DH_AroE"/>
    <property type="match status" value="1"/>
</dbReference>
<dbReference type="InterPro" id="IPR046346">
    <property type="entry name" value="Aminoacid_DH-like_N_sf"/>
</dbReference>
<dbReference type="InterPro" id="IPR036291">
    <property type="entry name" value="NAD(P)-bd_dom_sf"/>
</dbReference>
<dbReference type="InterPro" id="IPR041121">
    <property type="entry name" value="SDH_C"/>
</dbReference>
<dbReference type="InterPro" id="IPR011342">
    <property type="entry name" value="Shikimate_DH"/>
</dbReference>
<dbReference type="InterPro" id="IPR013708">
    <property type="entry name" value="Shikimate_DH-bd_N"/>
</dbReference>
<dbReference type="InterPro" id="IPR022893">
    <property type="entry name" value="Shikimate_DH_fam"/>
</dbReference>
<dbReference type="InterPro" id="IPR006151">
    <property type="entry name" value="Shikm_DH/Glu-tRNA_Rdtase"/>
</dbReference>
<dbReference type="NCBIfam" id="TIGR00507">
    <property type="entry name" value="aroE"/>
    <property type="match status" value="1"/>
</dbReference>
<dbReference type="NCBIfam" id="NF001319">
    <property type="entry name" value="PRK00258.3-3"/>
    <property type="match status" value="1"/>
</dbReference>
<dbReference type="PANTHER" id="PTHR21089:SF1">
    <property type="entry name" value="BIFUNCTIONAL 3-DEHYDROQUINATE DEHYDRATASE_SHIKIMATE DEHYDROGENASE, CHLOROPLASTIC"/>
    <property type="match status" value="1"/>
</dbReference>
<dbReference type="PANTHER" id="PTHR21089">
    <property type="entry name" value="SHIKIMATE DEHYDROGENASE"/>
    <property type="match status" value="1"/>
</dbReference>
<dbReference type="Pfam" id="PF18317">
    <property type="entry name" value="SDH_C"/>
    <property type="match status" value="1"/>
</dbReference>
<dbReference type="Pfam" id="PF01488">
    <property type="entry name" value="Shikimate_DH"/>
    <property type="match status" value="1"/>
</dbReference>
<dbReference type="Pfam" id="PF08501">
    <property type="entry name" value="Shikimate_dh_N"/>
    <property type="match status" value="1"/>
</dbReference>
<dbReference type="SUPFAM" id="SSF53223">
    <property type="entry name" value="Aminoacid dehydrogenase-like, N-terminal domain"/>
    <property type="match status" value="1"/>
</dbReference>
<dbReference type="SUPFAM" id="SSF51735">
    <property type="entry name" value="NAD(P)-binding Rossmann-fold domains"/>
    <property type="match status" value="1"/>
</dbReference>
<keyword id="KW-0028">Amino-acid biosynthesis</keyword>
<keyword id="KW-0057">Aromatic amino acid biosynthesis</keyword>
<keyword id="KW-0521">NADP</keyword>
<keyword id="KW-0560">Oxidoreductase</keyword>
<sequence>MKKWFAVIGDPIEHSKSPAMHNAWFEEMSVEATYIPLHVSSEQLGAAVAGLKTLGASGWNVTIPHKTAIIPYLDELDELAQKMGAVNTVVRTTEGKLIGYNTDGVGFVRSLEEAVGSSHKDKPVLLVGAGGAARGIAFAMQQQGYSDLTMTNRTVANAQAIVDEMGIGRAISLKEAEETLAHFSIIVQMTSAGLATGNFSMPFSLNRLAKGAIVADIVYNPLMTPFLQAAEEKGATIVTGLGMFVHQGAIAFEHWLGDYPNTNSMIVQLNAQLGGN</sequence>
<evidence type="ECO:0000255" key="1">
    <source>
        <dbReference type="HAMAP-Rule" id="MF_00222"/>
    </source>
</evidence>
<name>AROE_LYSSC</name>
<gene>
    <name evidence="1" type="primary">aroE</name>
    <name type="ordered locus">Bsph_3851</name>
</gene>
<reference key="1">
    <citation type="journal article" date="2008" name="J. Bacteriol.">
        <title>Complete genome sequence of the mosquitocidal bacterium Bacillus sphaericus C3-41 and comparison with those of closely related Bacillus species.</title>
        <authorList>
            <person name="Hu X."/>
            <person name="Fan W."/>
            <person name="Han B."/>
            <person name="Liu H."/>
            <person name="Zheng D."/>
            <person name="Li Q."/>
            <person name="Dong W."/>
            <person name="Yan J."/>
            <person name="Gao M."/>
            <person name="Berry C."/>
            <person name="Yuan Z."/>
        </authorList>
    </citation>
    <scope>NUCLEOTIDE SEQUENCE [LARGE SCALE GENOMIC DNA]</scope>
    <source>
        <strain>C3-41</strain>
    </source>
</reference>